<comment type="function">
    <text evidence="3 4 6">Ethanolamine-phosphate cytidylyltransferase that catalyzes the second step in the synthesis of phosphatidylethanolamine (PE) from ethanolamine via the CDP-ethanolamine pathway (PubMed:31637422, PubMed:9083101). Phosphatidylethanolamine is a dominant inner-leaflet phospholipid in cell membranes, where it plays a role in membrane function by structurally stabilizing membrane-anchored proteins, and participates in important cellular processes such as cell division, cell fusion, blood coagulation, and apoptosis (PubMed:9083101).</text>
</comment>
<comment type="catalytic activity">
    <reaction evidence="3 4">
        <text>phosphoethanolamine + CTP + H(+) = CDP-ethanolamine + diphosphate</text>
        <dbReference type="Rhea" id="RHEA:24592"/>
        <dbReference type="ChEBI" id="CHEBI:15378"/>
        <dbReference type="ChEBI" id="CHEBI:33019"/>
        <dbReference type="ChEBI" id="CHEBI:37563"/>
        <dbReference type="ChEBI" id="CHEBI:57876"/>
        <dbReference type="ChEBI" id="CHEBI:58190"/>
        <dbReference type="EC" id="2.7.7.14"/>
    </reaction>
    <physiologicalReaction direction="left-to-right" evidence="3 4">
        <dbReference type="Rhea" id="RHEA:24593"/>
    </physiologicalReaction>
</comment>
<comment type="pathway">
    <text evidence="3 4">Phospholipid metabolism; phosphatidylethanolamine biosynthesis; phosphatidylethanolamine from ethanolamine: step 2/3.</text>
</comment>
<comment type="interaction">
    <interactant intactId="EBI-750317">
        <id>Q99447</id>
    </interactant>
    <interactant intactId="EBI-718729">
        <id>P55212</id>
        <label>CASP6</label>
    </interactant>
    <organismsDiffer>false</organismsDiffer>
    <experiments>3</experiments>
</comment>
<comment type="interaction">
    <interactant intactId="EBI-750317">
        <id>Q99447</id>
    </interactant>
    <interactant intactId="EBI-12357161">
        <id>Q5SYC1</id>
        <label>CLVS2</label>
    </interactant>
    <organismsDiffer>false</organismsDiffer>
    <experiments>3</experiments>
</comment>
<comment type="interaction">
    <interactant intactId="EBI-750317">
        <id>Q99447</id>
    </interactant>
    <interactant intactId="EBI-6509505">
        <id>Q0VD86</id>
        <label>INCA1</label>
    </interactant>
    <organismsDiffer>false</organismsDiffer>
    <experiments>3</experiments>
</comment>
<comment type="interaction">
    <interactant intactId="EBI-750317">
        <id>Q99447</id>
    </interactant>
    <interactant intactId="EBI-1384248">
        <id>O15357</id>
        <label>INPPL1</label>
    </interactant>
    <organismsDiffer>false</organismsDiffer>
    <experiments>3</experiments>
</comment>
<comment type="interaction">
    <interactant intactId="EBI-750317">
        <id>Q99447</id>
    </interactant>
    <interactant intactId="EBI-21591415">
        <id>P13473-2</id>
        <label>LAMP2</label>
    </interactant>
    <organismsDiffer>false</organismsDiffer>
    <experiments>3</experiments>
</comment>
<comment type="interaction">
    <interactant intactId="EBI-750317">
        <id>Q99447</id>
    </interactant>
    <interactant intactId="EBI-5280197">
        <id>O75400-2</id>
        <label>PRPF40A</label>
    </interactant>
    <organismsDiffer>false</organismsDiffer>
    <experiments>3</experiments>
</comment>
<comment type="interaction">
    <interactant intactId="EBI-750317">
        <id>Q99447</id>
    </interactant>
    <interactant intactId="EBI-359352">
        <id>P25786</id>
        <label>PSMA1</label>
    </interactant>
    <organismsDiffer>false</organismsDiffer>
    <experiments>3</experiments>
</comment>
<comment type="interaction">
    <interactant intactId="EBI-750317">
        <id>Q99447</id>
    </interactant>
    <interactant intactId="EBI-10829018">
        <id>Q04864-2</id>
        <label>REL</label>
    </interactant>
    <organismsDiffer>false</organismsDiffer>
    <experiments>3</experiments>
</comment>
<comment type="alternative products">
    <event type="alternative splicing"/>
    <isoform>
        <id>Q99447-1</id>
        <name>1</name>
        <sequence type="displayed"/>
    </isoform>
    <isoform>
        <id>Q99447-2</id>
        <name>2</name>
        <sequence type="described" ref="VSP_045131"/>
    </isoform>
    <isoform>
        <id>Q99447-3</id>
        <name>3</name>
        <sequence type="described" ref="VSP_046844"/>
    </isoform>
    <isoform>
        <id>Q99447-4</id>
        <name>4</name>
        <sequence type="described" ref="VSP_054615"/>
    </isoform>
</comment>
<comment type="tissue specificity">
    <text evidence="4">Strongest expression in liver, heart, and skeletal muscle.</text>
</comment>
<comment type="disease" evidence="3">
    <disease id="DI-05756">
        <name>Spastic paraplegia 82, autosomal recessive</name>
        <acronym>SPG82</acronym>
        <description>A form of spastic paraplegia, a neurodegenerative disorder characterized by a slow, gradual, progressive weakness and spasticity of the lower limbs. Rate of progression and the severity of symptoms are quite variable. Initial symptoms may include difficulty with balance, weakness and stiffness in the legs, muscle spasms, and dragging the toes when walking. In some forms of the disorder, bladder symptoms (such as incontinence) may appear, or the weakness and stiffness may spread to other parts of the body. SPG82 is a complicated form characterized by global developmental delay with regression, spastic para- or tetraparesis, epilepsy and progressive cerebral and cerebellar atrophy.</description>
        <dbReference type="MIM" id="618770"/>
    </disease>
    <text>The disease is caused by variants affecting the gene represented in this entry.</text>
</comment>
<comment type="similarity">
    <text evidence="7">Belongs to the cytidylyltransferase family.</text>
</comment>
<proteinExistence type="evidence at protein level"/>
<gene>
    <name type="primary">PCYT2</name>
</gene>
<keyword id="KW-0002">3D-structure</keyword>
<keyword id="KW-0025">Alternative splicing</keyword>
<keyword id="KW-0225">Disease variant</keyword>
<keyword id="KW-0890">Hereditary spastic paraplegia</keyword>
<keyword id="KW-0444">Lipid biosynthesis</keyword>
<keyword id="KW-0443">Lipid metabolism</keyword>
<keyword id="KW-0523">Neurodegeneration</keyword>
<keyword id="KW-0548">Nucleotidyltransferase</keyword>
<keyword id="KW-0594">Phospholipid biosynthesis</keyword>
<keyword id="KW-1208">Phospholipid metabolism</keyword>
<keyword id="KW-0597">Phosphoprotein</keyword>
<keyword id="KW-1267">Proteomics identification</keyword>
<keyword id="KW-1185">Reference proteome</keyword>
<keyword id="KW-0808">Transferase</keyword>
<name>PCY2_HUMAN</name>
<dbReference type="EC" id="2.7.7.14" evidence="3 4"/>
<dbReference type="EMBL" id="D84307">
    <property type="protein sequence ID" value="BAA12311.1"/>
    <property type="molecule type" value="mRNA"/>
</dbReference>
<dbReference type="EMBL" id="CR456779">
    <property type="protein sequence ID" value="CAG33060.1"/>
    <property type="molecule type" value="mRNA"/>
</dbReference>
<dbReference type="EMBL" id="AK301723">
    <property type="protein sequence ID" value="BAH13541.1"/>
    <property type="molecule type" value="mRNA"/>
</dbReference>
<dbReference type="EMBL" id="AK316385">
    <property type="protein sequence ID" value="BAH14756.1"/>
    <property type="molecule type" value="mRNA"/>
</dbReference>
<dbReference type="EMBL" id="AC145207">
    <property type="status" value="NOT_ANNOTATED_CDS"/>
    <property type="molecule type" value="Genomic_DNA"/>
</dbReference>
<dbReference type="EMBL" id="CH471099">
    <property type="protein sequence ID" value="EAW89705.1"/>
    <property type="molecule type" value="Genomic_DNA"/>
</dbReference>
<dbReference type="EMBL" id="BC000351">
    <property type="protein sequence ID" value="AAH00351.1"/>
    <property type="molecule type" value="mRNA"/>
</dbReference>
<dbReference type="EMBL" id="BC010075">
    <property type="protein sequence ID" value="AAH10075.1"/>
    <property type="molecule type" value="mRNA"/>
</dbReference>
<dbReference type="CCDS" id="CCDS11791.1">
    <molecule id="Q99447-1"/>
</dbReference>
<dbReference type="CCDS" id="CCDS54178.1">
    <molecule id="Q99447-3"/>
</dbReference>
<dbReference type="CCDS" id="CCDS58610.1">
    <molecule id="Q99447-2"/>
</dbReference>
<dbReference type="CCDS" id="CCDS62364.1">
    <molecule id="Q99447-4"/>
</dbReference>
<dbReference type="RefSeq" id="NP_001171846.1">
    <molecule id="Q99447-3"/>
    <property type="nucleotide sequence ID" value="NM_001184917.3"/>
</dbReference>
<dbReference type="RefSeq" id="NP_001243364.1">
    <molecule id="Q99447-2"/>
    <property type="nucleotide sequence ID" value="NM_001256435.3"/>
</dbReference>
<dbReference type="RefSeq" id="NP_001269132.1">
    <molecule id="Q99447-2"/>
    <property type="nucleotide sequence ID" value="NM_001282203.2"/>
</dbReference>
<dbReference type="RefSeq" id="NP_001269133.1">
    <molecule id="Q99447-4"/>
    <property type="nucleotide sequence ID" value="NM_001282204.2"/>
</dbReference>
<dbReference type="RefSeq" id="NP_002852.1">
    <molecule id="Q99447-1"/>
    <property type="nucleotide sequence ID" value="NM_002861.5"/>
</dbReference>
<dbReference type="RefSeq" id="XP_016880400.1">
    <property type="nucleotide sequence ID" value="XM_017024911.1"/>
</dbReference>
<dbReference type="PDB" id="3ELB">
    <property type="method" value="X-ray"/>
    <property type="resolution" value="2.00 A"/>
    <property type="chains" value="A=18-356"/>
</dbReference>
<dbReference type="PDB" id="4XSV">
    <property type="method" value="X-ray"/>
    <property type="resolution" value="2.70 A"/>
    <property type="chains" value="A=18-356"/>
</dbReference>
<dbReference type="PDBsum" id="3ELB"/>
<dbReference type="PDBsum" id="4XSV"/>
<dbReference type="SMR" id="Q99447"/>
<dbReference type="BioGRID" id="111791">
    <property type="interactions" value="41"/>
</dbReference>
<dbReference type="FunCoup" id="Q99447">
    <property type="interactions" value="922"/>
</dbReference>
<dbReference type="IntAct" id="Q99447">
    <property type="interactions" value="21"/>
</dbReference>
<dbReference type="MINT" id="Q99447"/>
<dbReference type="STRING" id="9606.ENSP00000442050"/>
<dbReference type="DrugBank" id="DB00709">
    <property type="generic name" value="Lamivudine"/>
</dbReference>
<dbReference type="GlyGen" id="Q99447">
    <property type="glycosylation" value="1 site, 1 O-linked glycan (1 site)"/>
</dbReference>
<dbReference type="iPTMnet" id="Q99447"/>
<dbReference type="PhosphoSitePlus" id="Q99447"/>
<dbReference type="BioMuta" id="PCYT2"/>
<dbReference type="DMDM" id="12585314"/>
<dbReference type="jPOST" id="Q99447"/>
<dbReference type="MassIVE" id="Q99447"/>
<dbReference type="PaxDb" id="9606-ENSP00000442050"/>
<dbReference type="PeptideAtlas" id="Q99447"/>
<dbReference type="ProteomicsDB" id="27734"/>
<dbReference type="ProteomicsDB" id="6845"/>
<dbReference type="ProteomicsDB" id="7083"/>
<dbReference type="ProteomicsDB" id="78273">
    <molecule id="Q99447-1"/>
</dbReference>
<dbReference type="Pumba" id="Q99447"/>
<dbReference type="Antibodypedia" id="19846">
    <property type="antibodies" value="135 antibodies from 25 providers"/>
</dbReference>
<dbReference type="DNASU" id="5833"/>
<dbReference type="Ensembl" id="ENST00000331285.7">
    <molecule id="Q99447-2"/>
    <property type="protein sequence ID" value="ENSP00000331719.3"/>
    <property type="gene ID" value="ENSG00000185813.11"/>
</dbReference>
<dbReference type="Ensembl" id="ENST00000538721.6">
    <molecule id="Q99447-3"/>
    <property type="protein sequence ID" value="ENSP00000442050.2"/>
    <property type="gene ID" value="ENSG00000185813.11"/>
</dbReference>
<dbReference type="Ensembl" id="ENST00000538936.7">
    <molecule id="Q99447-1"/>
    <property type="protein sequence ID" value="ENSP00000439245.3"/>
    <property type="gene ID" value="ENSG00000185813.11"/>
</dbReference>
<dbReference type="Ensembl" id="ENST00000570388.5">
    <molecule id="Q99447-2"/>
    <property type="protein sequence ID" value="ENSP00000458330.1"/>
    <property type="gene ID" value="ENSG00000185813.11"/>
</dbReference>
<dbReference type="Ensembl" id="ENST00000570391.5">
    <molecule id="Q99447-4"/>
    <property type="protein sequence ID" value="ENSP00000461190.1"/>
    <property type="gene ID" value="ENSG00000185813.11"/>
</dbReference>
<dbReference type="GeneID" id="5833"/>
<dbReference type="KEGG" id="hsa:5833"/>
<dbReference type="MANE-Select" id="ENST00000538936.7">
    <property type="protein sequence ID" value="ENSP00000439245.3"/>
    <property type="RefSeq nucleotide sequence ID" value="NM_002861.5"/>
    <property type="RefSeq protein sequence ID" value="NP_002852.1"/>
</dbReference>
<dbReference type="UCSC" id="uc002kce.4">
    <molecule id="Q99447-1"/>
    <property type="organism name" value="human"/>
</dbReference>
<dbReference type="AGR" id="HGNC:8756"/>
<dbReference type="CTD" id="5833"/>
<dbReference type="DisGeNET" id="5833"/>
<dbReference type="GeneCards" id="PCYT2"/>
<dbReference type="HGNC" id="HGNC:8756">
    <property type="gene designation" value="PCYT2"/>
</dbReference>
<dbReference type="HPA" id="ENSG00000185813">
    <property type="expression patterns" value="Tissue enhanced (liver, testis)"/>
</dbReference>
<dbReference type="MalaCards" id="PCYT2"/>
<dbReference type="MIM" id="602679">
    <property type="type" value="gene"/>
</dbReference>
<dbReference type="MIM" id="618770">
    <property type="type" value="phenotype"/>
</dbReference>
<dbReference type="neXtProt" id="NX_Q99447"/>
<dbReference type="OpenTargets" id="ENSG00000185813"/>
<dbReference type="Orphanet" id="631073">
    <property type="disease" value="Autosomal recessive spastic paraplegia type 82"/>
</dbReference>
<dbReference type="PharmGKB" id="PA33101"/>
<dbReference type="VEuPathDB" id="HostDB:ENSG00000185813"/>
<dbReference type="eggNOG" id="KOG2803">
    <property type="taxonomic scope" value="Eukaryota"/>
</dbReference>
<dbReference type="GeneTree" id="ENSGT00550000075065"/>
<dbReference type="InParanoid" id="Q99447"/>
<dbReference type="OMA" id="QCKYINA"/>
<dbReference type="OrthoDB" id="40021at2759"/>
<dbReference type="PAN-GO" id="Q99447">
    <property type="GO annotations" value="3 GO annotations based on evolutionary models"/>
</dbReference>
<dbReference type="PhylomeDB" id="Q99447"/>
<dbReference type="TreeFam" id="TF106337"/>
<dbReference type="BioCyc" id="MetaCyc:HS06840-MONOMER"/>
<dbReference type="BRENDA" id="2.7.7.14">
    <property type="organism ID" value="2681"/>
</dbReference>
<dbReference type="PathwayCommons" id="Q99447"/>
<dbReference type="Reactome" id="R-HSA-1483213">
    <property type="pathway name" value="Synthesis of PE"/>
</dbReference>
<dbReference type="SignaLink" id="Q99447"/>
<dbReference type="UniPathway" id="UPA00558">
    <property type="reaction ID" value="UER00742"/>
</dbReference>
<dbReference type="BioGRID-ORCS" id="5833">
    <property type="hits" value="52 hits in 1160 CRISPR screens"/>
</dbReference>
<dbReference type="EvolutionaryTrace" id="Q99447"/>
<dbReference type="GenomeRNAi" id="5833"/>
<dbReference type="Pharos" id="Q99447">
    <property type="development level" value="Tbio"/>
</dbReference>
<dbReference type="PRO" id="PR:Q99447"/>
<dbReference type="Proteomes" id="UP000005640">
    <property type="component" value="Chromosome 17"/>
</dbReference>
<dbReference type="RNAct" id="Q99447">
    <property type="molecule type" value="protein"/>
</dbReference>
<dbReference type="Bgee" id="ENSG00000185813">
    <property type="expression patterns" value="Expressed in left testis and 180 other cell types or tissues"/>
</dbReference>
<dbReference type="ExpressionAtlas" id="Q99447">
    <property type="expression patterns" value="baseline and differential"/>
</dbReference>
<dbReference type="GO" id="GO:0005737">
    <property type="term" value="C:cytoplasm"/>
    <property type="evidence" value="ECO:0000318"/>
    <property type="project" value="GO_Central"/>
</dbReference>
<dbReference type="GO" id="GO:0005789">
    <property type="term" value="C:endoplasmic reticulum membrane"/>
    <property type="evidence" value="ECO:0000304"/>
    <property type="project" value="Reactome"/>
</dbReference>
<dbReference type="GO" id="GO:0004306">
    <property type="term" value="F:ethanolamine-phosphate cytidylyltransferase activity"/>
    <property type="evidence" value="ECO:0000315"/>
    <property type="project" value="UniProtKB"/>
</dbReference>
<dbReference type="GO" id="GO:0006646">
    <property type="term" value="P:phosphatidylethanolamine biosynthetic process"/>
    <property type="evidence" value="ECO:0000315"/>
    <property type="project" value="UniProtKB"/>
</dbReference>
<dbReference type="GO" id="GO:0008654">
    <property type="term" value="P:phospholipid biosynthetic process"/>
    <property type="evidence" value="ECO:0000304"/>
    <property type="project" value="UniProtKB"/>
</dbReference>
<dbReference type="CDD" id="cd02174">
    <property type="entry name" value="CCT"/>
    <property type="match status" value="1"/>
</dbReference>
<dbReference type="CDD" id="cd02173">
    <property type="entry name" value="ECT"/>
    <property type="match status" value="1"/>
</dbReference>
<dbReference type="FunFam" id="3.40.50.620:FF:000088">
    <property type="entry name" value="Ethanolamine-phosphate cytidylyltransferase isoform 2"/>
    <property type="match status" value="1"/>
</dbReference>
<dbReference type="FunFam" id="3.40.50.620:FF:000108">
    <property type="entry name" value="Ethanolamine-phosphate cytidylyltransferase isoform 2"/>
    <property type="match status" value="1"/>
</dbReference>
<dbReference type="Gene3D" id="3.40.50.620">
    <property type="entry name" value="HUPs"/>
    <property type="match status" value="2"/>
</dbReference>
<dbReference type="InterPro" id="IPR041723">
    <property type="entry name" value="CCT"/>
</dbReference>
<dbReference type="InterPro" id="IPR004821">
    <property type="entry name" value="Cyt_trans-like"/>
</dbReference>
<dbReference type="InterPro" id="IPR044608">
    <property type="entry name" value="Ect1/PCYT2"/>
</dbReference>
<dbReference type="InterPro" id="IPR014729">
    <property type="entry name" value="Rossmann-like_a/b/a_fold"/>
</dbReference>
<dbReference type="NCBIfam" id="TIGR00125">
    <property type="entry name" value="cyt_tran_rel"/>
    <property type="match status" value="2"/>
</dbReference>
<dbReference type="PANTHER" id="PTHR45780">
    <property type="entry name" value="ETHANOLAMINE-PHOSPHATE CYTIDYLYLTRANSFERASE"/>
    <property type="match status" value="1"/>
</dbReference>
<dbReference type="PANTHER" id="PTHR45780:SF2">
    <property type="entry name" value="ETHANOLAMINE-PHOSPHATE CYTIDYLYLTRANSFERASE"/>
    <property type="match status" value="1"/>
</dbReference>
<dbReference type="Pfam" id="PF01467">
    <property type="entry name" value="CTP_transf_like"/>
    <property type="match status" value="2"/>
</dbReference>
<dbReference type="SUPFAM" id="SSF52374">
    <property type="entry name" value="Nucleotidylyl transferase"/>
    <property type="match status" value="2"/>
</dbReference>
<accession>Q99447</accession>
<accession>B7Z7A5</accession>
<accession>B7ZAS0</accession>
<accession>F5H8B1</accession>
<accession>Q6IBM3</accession>
<accession>Q96G08</accession>
<reference key="1">
    <citation type="journal article" date="1997" name="J. Biol. Chem.">
        <title>Cloning of a human cDNA for CTP-phosphoethanolamine cytidylyltransferase by complementation in vivo of a yeast mutant.</title>
        <authorList>
            <person name="Nakashima A."/>
            <person name="Hosaka K."/>
            <person name="Nikawa J."/>
        </authorList>
    </citation>
    <scope>NUCLEOTIDE SEQUENCE [MRNA] (ISOFORM 1)</scope>
    <scope>FUNCTION</scope>
    <scope>CATALYTIC ACTIVITY</scope>
    <scope>PATHWAY</scope>
    <scope>TISSUE SPECIFICITY</scope>
</reference>
<reference key="2">
    <citation type="submission" date="2004-06" db="EMBL/GenBank/DDBJ databases">
        <title>Cloning of human full open reading frames in Gateway(TM) system entry vector (pDONR201).</title>
        <authorList>
            <person name="Ebert L."/>
            <person name="Schick M."/>
            <person name="Neubert P."/>
            <person name="Schatten R."/>
            <person name="Henze S."/>
            <person name="Korn B."/>
        </authorList>
    </citation>
    <scope>NUCLEOTIDE SEQUENCE [LARGE SCALE MRNA] (ISOFORM 1)</scope>
</reference>
<reference key="3">
    <citation type="submission" date="2005-07" db="EMBL/GenBank/DDBJ databases">
        <authorList>
            <person name="Mural R.J."/>
            <person name="Istrail S."/>
            <person name="Sutton G.G."/>
            <person name="Florea L."/>
            <person name="Halpern A.L."/>
            <person name="Mobarry C.M."/>
            <person name="Lippert R."/>
            <person name="Walenz B."/>
            <person name="Shatkay H."/>
            <person name="Dew I."/>
            <person name="Miller J.R."/>
            <person name="Flanigan M.J."/>
            <person name="Edwards N.J."/>
            <person name="Bolanos R."/>
            <person name="Fasulo D."/>
            <person name="Halldorsson B.V."/>
            <person name="Hannenhalli S."/>
            <person name="Turner R."/>
            <person name="Yooseph S."/>
            <person name="Lu F."/>
            <person name="Nusskern D.R."/>
            <person name="Shue B.C."/>
            <person name="Zheng X.H."/>
            <person name="Zhong F."/>
            <person name="Delcher A.L."/>
            <person name="Huson D.H."/>
            <person name="Kravitz S.A."/>
            <person name="Mouchard L."/>
            <person name="Reinert K."/>
            <person name="Remington K.A."/>
            <person name="Clark A.G."/>
            <person name="Waterman M.S."/>
            <person name="Eichler E.E."/>
            <person name="Adams M.D."/>
            <person name="Hunkapiller M.W."/>
            <person name="Myers E.W."/>
            <person name="Venter J.C."/>
        </authorList>
    </citation>
    <scope>NUCLEOTIDE SEQUENCE [LARGE SCALE GENOMIC DNA]</scope>
</reference>
<reference key="4">
    <citation type="journal article" date="2004" name="Nat. Genet.">
        <title>Complete sequencing and characterization of 21,243 full-length human cDNAs.</title>
        <authorList>
            <person name="Ota T."/>
            <person name="Suzuki Y."/>
            <person name="Nishikawa T."/>
            <person name="Otsuki T."/>
            <person name="Sugiyama T."/>
            <person name="Irie R."/>
            <person name="Wakamatsu A."/>
            <person name="Hayashi K."/>
            <person name="Sato H."/>
            <person name="Nagai K."/>
            <person name="Kimura K."/>
            <person name="Makita H."/>
            <person name="Sekine M."/>
            <person name="Obayashi M."/>
            <person name="Nishi T."/>
            <person name="Shibahara T."/>
            <person name="Tanaka T."/>
            <person name="Ishii S."/>
            <person name="Yamamoto J."/>
            <person name="Saito K."/>
            <person name="Kawai Y."/>
            <person name="Isono Y."/>
            <person name="Nakamura Y."/>
            <person name="Nagahari K."/>
            <person name="Murakami K."/>
            <person name="Yasuda T."/>
            <person name="Iwayanagi T."/>
            <person name="Wagatsuma M."/>
            <person name="Shiratori A."/>
            <person name="Sudo H."/>
            <person name="Hosoiri T."/>
            <person name="Kaku Y."/>
            <person name="Kodaira H."/>
            <person name="Kondo H."/>
            <person name="Sugawara M."/>
            <person name="Takahashi M."/>
            <person name="Kanda K."/>
            <person name="Yokoi T."/>
            <person name="Furuya T."/>
            <person name="Kikkawa E."/>
            <person name="Omura Y."/>
            <person name="Abe K."/>
            <person name="Kamihara K."/>
            <person name="Katsuta N."/>
            <person name="Sato K."/>
            <person name="Tanikawa M."/>
            <person name="Yamazaki M."/>
            <person name="Ninomiya K."/>
            <person name="Ishibashi T."/>
            <person name="Yamashita H."/>
            <person name="Murakawa K."/>
            <person name="Fujimori K."/>
            <person name="Tanai H."/>
            <person name="Kimata M."/>
            <person name="Watanabe M."/>
            <person name="Hiraoka S."/>
            <person name="Chiba Y."/>
            <person name="Ishida S."/>
            <person name="Ono Y."/>
            <person name="Takiguchi S."/>
            <person name="Watanabe S."/>
            <person name="Yosida M."/>
            <person name="Hotuta T."/>
            <person name="Kusano J."/>
            <person name="Kanehori K."/>
            <person name="Takahashi-Fujii A."/>
            <person name="Hara H."/>
            <person name="Tanase T.-O."/>
            <person name="Nomura Y."/>
            <person name="Togiya S."/>
            <person name="Komai F."/>
            <person name="Hara R."/>
            <person name="Takeuchi K."/>
            <person name="Arita M."/>
            <person name="Imose N."/>
            <person name="Musashino K."/>
            <person name="Yuuki H."/>
            <person name="Oshima A."/>
            <person name="Sasaki N."/>
            <person name="Aotsuka S."/>
            <person name="Yoshikawa Y."/>
            <person name="Matsunawa H."/>
            <person name="Ichihara T."/>
            <person name="Shiohata N."/>
            <person name="Sano S."/>
            <person name="Moriya S."/>
            <person name="Momiyama H."/>
            <person name="Satoh N."/>
            <person name="Takami S."/>
            <person name="Terashima Y."/>
            <person name="Suzuki O."/>
            <person name="Nakagawa S."/>
            <person name="Senoh A."/>
            <person name="Mizoguchi H."/>
            <person name="Goto Y."/>
            <person name="Shimizu F."/>
            <person name="Wakebe H."/>
            <person name="Hishigaki H."/>
            <person name="Watanabe T."/>
            <person name="Sugiyama A."/>
            <person name="Takemoto M."/>
            <person name="Kawakami B."/>
            <person name="Yamazaki M."/>
            <person name="Watanabe K."/>
            <person name="Kumagai A."/>
            <person name="Itakura S."/>
            <person name="Fukuzumi Y."/>
            <person name="Fujimori Y."/>
            <person name="Komiyama M."/>
            <person name="Tashiro H."/>
            <person name="Tanigami A."/>
            <person name="Fujiwara T."/>
            <person name="Ono T."/>
            <person name="Yamada K."/>
            <person name="Fujii Y."/>
            <person name="Ozaki K."/>
            <person name="Hirao M."/>
            <person name="Ohmori Y."/>
            <person name="Kawabata A."/>
            <person name="Hikiji T."/>
            <person name="Kobatake N."/>
            <person name="Inagaki H."/>
            <person name="Ikema Y."/>
            <person name="Okamoto S."/>
            <person name="Okitani R."/>
            <person name="Kawakami T."/>
            <person name="Noguchi S."/>
            <person name="Itoh T."/>
            <person name="Shigeta K."/>
            <person name="Senba T."/>
            <person name="Matsumura K."/>
            <person name="Nakajima Y."/>
            <person name="Mizuno T."/>
            <person name="Morinaga M."/>
            <person name="Sasaki M."/>
            <person name="Togashi T."/>
            <person name="Oyama M."/>
            <person name="Hata H."/>
            <person name="Watanabe M."/>
            <person name="Komatsu T."/>
            <person name="Mizushima-Sugano J."/>
            <person name="Satoh T."/>
            <person name="Shirai Y."/>
            <person name="Takahashi Y."/>
            <person name="Nakagawa K."/>
            <person name="Okumura K."/>
            <person name="Nagase T."/>
            <person name="Nomura N."/>
            <person name="Kikuchi H."/>
            <person name="Masuho Y."/>
            <person name="Yamashita R."/>
            <person name="Nakai K."/>
            <person name="Yada T."/>
            <person name="Nakamura Y."/>
            <person name="Ohara O."/>
            <person name="Isogai T."/>
            <person name="Sugano S."/>
        </authorList>
    </citation>
    <scope>NUCLEOTIDE SEQUENCE [LARGE SCALE MRNA] (ISOFORMS 2 AND 4)</scope>
    <source>
        <tissue>Testis</tissue>
    </source>
</reference>
<reference key="5">
    <citation type="journal article" date="2006" name="Nature">
        <title>DNA sequence of human chromosome 17 and analysis of rearrangement in the human lineage.</title>
        <authorList>
            <person name="Zody M.C."/>
            <person name="Garber M."/>
            <person name="Adams D.J."/>
            <person name="Sharpe T."/>
            <person name="Harrow J."/>
            <person name="Lupski J.R."/>
            <person name="Nicholson C."/>
            <person name="Searle S.M."/>
            <person name="Wilming L."/>
            <person name="Young S.K."/>
            <person name="Abouelleil A."/>
            <person name="Allen N.R."/>
            <person name="Bi W."/>
            <person name="Bloom T."/>
            <person name="Borowsky M.L."/>
            <person name="Bugalter B.E."/>
            <person name="Butler J."/>
            <person name="Chang J.L."/>
            <person name="Chen C.-K."/>
            <person name="Cook A."/>
            <person name="Corum B."/>
            <person name="Cuomo C.A."/>
            <person name="de Jong P.J."/>
            <person name="DeCaprio D."/>
            <person name="Dewar K."/>
            <person name="FitzGerald M."/>
            <person name="Gilbert J."/>
            <person name="Gibson R."/>
            <person name="Gnerre S."/>
            <person name="Goldstein S."/>
            <person name="Grafham D.V."/>
            <person name="Grocock R."/>
            <person name="Hafez N."/>
            <person name="Hagopian D.S."/>
            <person name="Hart E."/>
            <person name="Norman C.H."/>
            <person name="Humphray S."/>
            <person name="Jaffe D.B."/>
            <person name="Jones M."/>
            <person name="Kamal M."/>
            <person name="Khodiyar V.K."/>
            <person name="LaButti K."/>
            <person name="Laird G."/>
            <person name="Lehoczky J."/>
            <person name="Liu X."/>
            <person name="Lokyitsang T."/>
            <person name="Loveland J."/>
            <person name="Lui A."/>
            <person name="Macdonald P."/>
            <person name="Major J.E."/>
            <person name="Matthews L."/>
            <person name="Mauceli E."/>
            <person name="McCarroll S.A."/>
            <person name="Mihalev A.H."/>
            <person name="Mudge J."/>
            <person name="Nguyen C."/>
            <person name="Nicol R."/>
            <person name="O'Leary S.B."/>
            <person name="Osoegawa K."/>
            <person name="Schwartz D.C."/>
            <person name="Shaw-Smith C."/>
            <person name="Stankiewicz P."/>
            <person name="Steward C."/>
            <person name="Swarbreck D."/>
            <person name="Venkataraman V."/>
            <person name="Whittaker C.A."/>
            <person name="Yang X."/>
            <person name="Zimmer A.R."/>
            <person name="Bradley A."/>
            <person name="Hubbard T."/>
            <person name="Birren B.W."/>
            <person name="Rogers J."/>
            <person name="Lander E.S."/>
            <person name="Nusbaum C."/>
        </authorList>
    </citation>
    <scope>NUCLEOTIDE SEQUENCE [LARGE SCALE GENOMIC DNA]</scope>
</reference>
<reference key="6">
    <citation type="journal article" date="2004" name="Genome Res.">
        <title>The status, quality, and expansion of the NIH full-length cDNA project: the Mammalian Gene Collection (MGC).</title>
        <authorList>
            <consortium name="The MGC Project Team"/>
        </authorList>
    </citation>
    <scope>NUCLEOTIDE SEQUENCE [LARGE SCALE MRNA] (ISOFORM 1)</scope>
    <source>
        <tissue>Muscle</tissue>
    </source>
</reference>
<reference key="7">
    <citation type="journal article" date="2011" name="BMC Syst. Biol.">
        <title>Initial characterization of the human central proteome.</title>
        <authorList>
            <person name="Burkard T.R."/>
            <person name="Planyavsky M."/>
            <person name="Kaupe I."/>
            <person name="Breitwieser F.P."/>
            <person name="Buerckstuemmer T."/>
            <person name="Bennett K.L."/>
            <person name="Superti-Furga G."/>
            <person name="Colinge J."/>
        </authorList>
    </citation>
    <scope>IDENTIFICATION BY MASS SPECTROMETRY [LARGE SCALE ANALYSIS]</scope>
</reference>
<reference key="8">
    <citation type="journal article" date="2011" name="Sci. Signal.">
        <title>System-wide temporal characterization of the proteome and phosphoproteome of human embryonic stem cell differentiation.</title>
        <authorList>
            <person name="Rigbolt K.T."/>
            <person name="Prokhorova T.A."/>
            <person name="Akimov V."/>
            <person name="Henningsen J."/>
            <person name="Johansen P.T."/>
            <person name="Kratchmarova I."/>
            <person name="Kassem M."/>
            <person name="Mann M."/>
            <person name="Olsen J.V."/>
            <person name="Blagoev B."/>
        </authorList>
    </citation>
    <scope>IDENTIFICATION BY MASS SPECTROMETRY [LARGE SCALE ANALYSIS]</scope>
</reference>
<reference key="9">
    <citation type="journal article" date="2013" name="J. Proteome Res.">
        <title>Toward a comprehensive characterization of a human cancer cell phosphoproteome.</title>
        <authorList>
            <person name="Zhou H."/>
            <person name="Di Palma S."/>
            <person name="Preisinger C."/>
            <person name="Peng M."/>
            <person name="Polat A.N."/>
            <person name="Heck A.J."/>
            <person name="Mohammed S."/>
        </authorList>
    </citation>
    <scope>PHOSPHORYLATION [LARGE SCALE ANALYSIS] AT THR-341</scope>
    <scope>IDENTIFICATION BY MASS SPECTROMETRY [LARGE SCALE ANALYSIS]</scope>
    <source>
        <tissue>Erythroleukemia</tissue>
    </source>
</reference>
<reference key="10">
    <citation type="journal article" date="2014" name="J. Proteomics">
        <title>An enzyme assisted RP-RPLC approach for in-depth analysis of human liver phosphoproteome.</title>
        <authorList>
            <person name="Bian Y."/>
            <person name="Song C."/>
            <person name="Cheng K."/>
            <person name="Dong M."/>
            <person name="Wang F."/>
            <person name="Huang J."/>
            <person name="Sun D."/>
            <person name="Wang L."/>
            <person name="Ye M."/>
            <person name="Zou H."/>
        </authorList>
    </citation>
    <scope>PHOSPHORYLATION [LARGE SCALE ANALYSIS] AT SER-338</scope>
    <scope>IDENTIFICATION BY MASS SPECTROMETRY [LARGE SCALE ANALYSIS]</scope>
    <source>
        <tissue>Liver</tissue>
    </source>
</reference>
<reference key="11">
    <citation type="journal article" date="2019" name="Brain">
        <title>Mutations in PCYT2 disrupt etherlipid biosynthesis and cause a complex hereditary spastic paraplegia.</title>
        <authorList>
            <consortium name="Deciphering Developmental Disorders Study"/>
            <person name="Vaz F.M."/>
            <person name="McDermott J.H."/>
            <person name="Alders M."/>
            <person name="Wortmann S.B."/>
            <person name="Koelker S."/>
            <person name="Pras-Raves M.L."/>
            <person name="Vervaart M.A.T."/>
            <person name="van Lenthe H."/>
            <person name="Luyf A.C.M."/>
            <person name="Elfrink H.L."/>
            <person name="Metcalfe K."/>
            <person name="Cuvertino S."/>
            <person name="Clayton P.E."/>
            <person name="Yarwood R."/>
            <person name="Lowe M.P."/>
            <person name="Lovell S."/>
            <person name="Rogers R.C."/>
            <person name="van Kampen A.H.C."/>
            <person name="Ruiter J.P.N."/>
            <person name="Wanders R.J.A."/>
            <person name="Ferdinandusse S."/>
            <person name="van Weeghel M."/>
            <person name="Engelen M."/>
            <person name="Banka S."/>
        </authorList>
    </citation>
    <scope>INVOLVEMENT IN SPG82</scope>
    <scope>VARIANTS SPG82 TYR-226; LEU-289 AND 359-ARG--PHE-389 DEL</scope>
    <scope>FUNCTION</scope>
    <scope>CATALYTIC ACTIVITY</scope>
    <scope>PATHWAY</scope>
</reference>
<reference key="12">
    <citation type="submission" date="2011-07" db="PDB data bank">
        <title>Human CTP:phosphoethanolamine cytidylyltransferase.</title>
        <authorList>
            <consortium name="Structural genomics consortium (SGC)"/>
        </authorList>
    </citation>
    <scope>X-RAY CRYSTALLOGRAPHY (2.0 ANGSTROMS) OF 18-356 IN COMPLEX WITH CYTIDINE-5'-MONOPHOSPHATE</scope>
</reference>
<sequence length="389" mass="43835">MIRNGRGAAGGAEQPGPGGRRAVRVWCDGCYDMVHYGHSNQLRQARAMGDYLIVGVHTDEEIAKHKGPPVFTQEERYKMVQAIKWVDEVVPAAPYVTTLETLDKYNCDFCVHGNDITLTVDGRDTYEEVKQAGRYRECKRTQGVSTTDLVGRMLLVTKAHHSSQEMSSEYREYADSFGKCPGGRNPWTGVSQFLQTSQKIIQFASGKEPQPGETVIYVAGAFDLFHIGHVDFLEKVHRLAERPYIIAGLHFDQEVNHYKGKNYPIMNLHERTLSVLACRYVSEVVIGAPYAVTAELLSHFKVDLVCHGKTEIIPDRDGSDPYQEPKRRGIFRQIDSGSNLTTDLIVQRIITNRLEYEARNQKKEAKELAFLEAARQQAAQPLGERDGDF</sequence>
<protein>
    <recommendedName>
        <fullName>Ethanolamine-phosphate cytidylyltransferase</fullName>
        <ecNumber evidence="3 4">2.7.7.14</ecNumber>
    </recommendedName>
    <alternativeName>
        <fullName>CTP:phosphoethanolamine cytidylyltransferase</fullName>
    </alternativeName>
    <alternativeName>
        <fullName>Phosphorylethanolamine transferase</fullName>
    </alternativeName>
</protein>
<evidence type="ECO:0000250" key="1">
    <source>
        <dbReference type="UniProtKB" id="O88637"/>
    </source>
</evidence>
<evidence type="ECO:0000256" key="2">
    <source>
        <dbReference type="SAM" id="MobiDB-lite"/>
    </source>
</evidence>
<evidence type="ECO:0000269" key="3">
    <source>
    </source>
</evidence>
<evidence type="ECO:0000269" key="4">
    <source>
    </source>
</evidence>
<evidence type="ECO:0000303" key="5">
    <source>
    </source>
</evidence>
<evidence type="ECO:0000303" key="6">
    <source>
    </source>
</evidence>
<evidence type="ECO:0000305" key="7"/>
<evidence type="ECO:0007744" key="8">
    <source>
    </source>
</evidence>
<evidence type="ECO:0007744" key="9">
    <source>
    </source>
</evidence>
<evidence type="ECO:0007829" key="10">
    <source>
        <dbReference type="PDB" id="3ELB"/>
    </source>
</evidence>
<organism>
    <name type="scientific">Homo sapiens</name>
    <name type="common">Human</name>
    <dbReference type="NCBI Taxonomy" id="9606"/>
    <lineage>
        <taxon>Eukaryota</taxon>
        <taxon>Metazoa</taxon>
        <taxon>Chordata</taxon>
        <taxon>Craniata</taxon>
        <taxon>Vertebrata</taxon>
        <taxon>Euteleostomi</taxon>
        <taxon>Mammalia</taxon>
        <taxon>Eutheria</taxon>
        <taxon>Euarchontoglires</taxon>
        <taxon>Primates</taxon>
        <taxon>Haplorrhini</taxon>
        <taxon>Catarrhini</taxon>
        <taxon>Hominidae</taxon>
        <taxon>Homo</taxon>
    </lineage>
</organism>
<feature type="chain" id="PRO_0000208461" description="Ethanolamine-phosphate cytidylyltransferase">
    <location>
        <begin position="1"/>
        <end position="389"/>
    </location>
</feature>
<feature type="region of interest" description="Disordered" evidence="2">
    <location>
        <begin position="1"/>
        <end position="20"/>
    </location>
</feature>
<feature type="binding site">
    <location>
        <begin position="221"/>
        <end position="222"/>
    </location>
    <ligand>
        <name>CTP</name>
        <dbReference type="ChEBI" id="CHEBI:37563"/>
    </ligand>
</feature>
<feature type="binding site">
    <location>
        <begin position="229"/>
        <end position="232"/>
    </location>
    <ligand>
        <name>CTP</name>
        <dbReference type="ChEBI" id="CHEBI:37563"/>
    </ligand>
</feature>
<feature type="binding site">
    <location>
        <position position="259"/>
    </location>
    <ligand>
        <name>CTP</name>
        <dbReference type="ChEBI" id="CHEBI:37563"/>
    </ligand>
</feature>
<feature type="binding site">
    <location>
        <begin position="307"/>
        <end position="310"/>
    </location>
    <ligand>
        <name>CTP</name>
        <dbReference type="ChEBI" id="CHEBI:37563"/>
    </ligand>
</feature>
<feature type="binding site">
    <location>
        <begin position="336"/>
        <end position="340"/>
    </location>
    <ligand>
        <name>CTP</name>
        <dbReference type="ChEBI" id="CHEBI:37563"/>
    </ligand>
</feature>
<feature type="modified residue" description="Phosphoserine" evidence="9">
    <location>
        <position position="338"/>
    </location>
</feature>
<feature type="modified residue" description="Phosphothreonine" evidence="8">
    <location>
        <position position="341"/>
    </location>
</feature>
<feature type="modified residue" description="Phosphothreonine" evidence="1">
    <location>
        <position position="342"/>
    </location>
</feature>
<feature type="splice variant" id="VSP_045131" description="In isoform 2." evidence="5">
    <location>
        <begin position="1"/>
        <end position="78"/>
    </location>
</feature>
<feature type="splice variant" id="VSP_054615" description="In isoform 4." evidence="5">
    <location>
        <begin position="1"/>
        <end position="32"/>
    </location>
</feature>
<feature type="splice variant" id="VSP_046844" description="In isoform 3." evidence="7">
    <original>K</original>
    <variation>KPPHPIPAGDILSSEGCSQ</variation>
    <location>
        <position position="179"/>
    </location>
</feature>
<feature type="sequence variant" id="VAR_083888" description="In SPG82; uncertain significance; dbSNP:rs778113360." evidence="3">
    <original>H</original>
    <variation>Y</variation>
    <location>
        <position position="226"/>
    </location>
</feature>
<feature type="sequence variant" id="VAR_083889" description="In SPG82; uncertain significance; dbSNP:rs1204173741." evidence="3">
    <original>P</original>
    <variation>L</variation>
    <location>
        <position position="289"/>
    </location>
</feature>
<feature type="sequence variant" id="VAR_083890" description="In SPG82; decreased protein abundance; loss of ethanolamine-phosphate cytidylyltransferase activity." evidence="3">
    <location>
        <begin position="359"/>
        <end position="389"/>
    </location>
</feature>
<feature type="sequence conflict" description="In Ref. 6; AAH10075." evidence="7" ref="6">
    <original>Y</original>
    <variation>H</variation>
    <location>
        <position position="244"/>
    </location>
</feature>
<feature type="strand" evidence="10">
    <location>
        <begin position="24"/>
        <end position="29"/>
    </location>
</feature>
<feature type="helix" evidence="10">
    <location>
        <begin position="36"/>
        <end position="47"/>
    </location>
</feature>
<feature type="strand" evidence="10">
    <location>
        <begin position="49"/>
        <end position="56"/>
    </location>
</feature>
<feature type="helix" evidence="10">
    <location>
        <begin position="59"/>
        <end position="65"/>
    </location>
</feature>
<feature type="helix" evidence="10">
    <location>
        <begin position="73"/>
        <end position="82"/>
    </location>
</feature>
<feature type="strand" evidence="10">
    <location>
        <begin position="88"/>
        <end position="91"/>
    </location>
</feature>
<feature type="helix" evidence="10">
    <location>
        <begin position="99"/>
        <end position="104"/>
    </location>
</feature>
<feature type="strand" evidence="10">
    <location>
        <begin position="108"/>
        <end position="112"/>
    </location>
</feature>
<feature type="helix" evidence="10">
    <location>
        <begin position="127"/>
        <end position="131"/>
    </location>
</feature>
<feature type="strand" evidence="10">
    <location>
        <begin position="135"/>
        <end position="137"/>
    </location>
</feature>
<feature type="helix" evidence="10">
    <location>
        <begin position="146"/>
        <end position="154"/>
    </location>
</feature>
<feature type="helix" evidence="10">
    <location>
        <begin position="197"/>
        <end position="203"/>
    </location>
</feature>
<feature type="strand" evidence="10">
    <location>
        <begin position="214"/>
        <end position="220"/>
    </location>
</feature>
<feature type="helix" evidence="10">
    <location>
        <begin position="227"/>
        <end position="237"/>
    </location>
</feature>
<feature type="strand" evidence="10">
    <location>
        <begin position="240"/>
        <end position="250"/>
    </location>
</feature>
<feature type="helix" evidence="10">
    <location>
        <begin position="252"/>
        <end position="259"/>
    </location>
</feature>
<feature type="helix" evidence="10">
    <location>
        <begin position="268"/>
        <end position="276"/>
    </location>
</feature>
<feature type="strand" evidence="10">
    <location>
        <begin position="283"/>
        <end position="288"/>
    </location>
</feature>
<feature type="helix" evidence="10">
    <location>
        <begin position="294"/>
        <end position="299"/>
    </location>
</feature>
<feature type="strand" evidence="10">
    <location>
        <begin position="303"/>
        <end position="307"/>
    </location>
</feature>
<feature type="helix" evidence="10">
    <location>
        <begin position="323"/>
        <end position="328"/>
    </location>
</feature>
<feature type="strand" evidence="10">
    <location>
        <begin position="331"/>
        <end position="333"/>
    </location>
</feature>
<feature type="helix" evidence="10">
    <location>
        <begin position="342"/>
        <end position="350"/>
    </location>
</feature>